<evidence type="ECO:0000255" key="1">
    <source>
        <dbReference type="HAMAP-Rule" id="MF_01043"/>
    </source>
</evidence>
<proteinExistence type="inferred from homology"/>
<accession>Q7WI35</accession>
<organism>
    <name type="scientific">Bordetella bronchiseptica (strain ATCC BAA-588 / NCTC 13252 / RB50)</name>
    <name type="common">Alcaligenes bronchisepticus</name>
    <dbReference type="NCBI Taxonomy" id="257310"/>
    <lineage>
        <taxon>Bacteria</taxon>
        <taxon>Pseudomonadati</taxon>
        <taxon>Pseudomonadota</taxon>
        <taxon>Betaproteobacteria</taxon>
        <taxon>Burkholderiales</taxon>
        <taxon>Alcaligenaceae</taxon>
        <taxon>Bordetella</taxon>
    </lineage>
</organism>
<sequence>MPATMVLTAPSLLSSSALIVLAYLIGSIPFAVVVSKLMGLQDPRSYGSGNPGATNVLRTGNKTAAALTLLGDAAKGWFALWLARALVPELSWGAYALVALAVFLGHLYPLFLRFKGGKGVATALGVLMAIEPWLAVATIATWLIVAVFSRYSSLAALVAAFFAPVYYVFGSGAAWHARLEVGLAIAVISALLFYRHRANIARLLKGTESRIGKKK</sequence>
<reference key="1">
    <citation type="journal article" date="2003" name="Nat. Genet.">
        <title>Comparative analysis of the genome sequences of Bordetella pertussis, Bordetella parapertussis and Bordetella bronchiseptica.</title>
        <authorList>
            <person name="Parkhill J."/>
            <person name="Sebaihia M."/>
            <person name="Preston A."/>
            <person name="Murphy L.D."/>
            <person name="Thomson N.R."/>
            <person name="Harris D.E."/>
            <person name="Holden M.T.G."/>
            <person name="Churcher C.M."/>
            <person name="Bentley S.D."/>
            <person name="Mungall K.L."/>
            <person name="Cerdeno-Tarraga A.-M."/>
            <person name="Temple L."/>
            <person name="James K.D."/>
            <person name="Harris B."/>
            <person name="Quail M.A."/>
            <person name="Achtman M."/>
            <person name="Atkin R."/>
            <person name="Baker S."/>
            <person name="Basham D."/>
            <person name="Bason N."/>
            <person name="Cherevach I."/>
            <person name="Chillingworth T."/>
            <person name="Collins M."/>
            <person name="Cronin A."/>
            <person name="Davis P."/>
            <person name="Doggett J."/>
            <person name="Feltwell T."/>
            <person name="Goble A."/>
            <person name="Hamlin N."/>
            <person name="Hauser H."/>
            <person name="Holroyd S."/>
            <person name="Jagels K."/>
            <person name="Leather S."/>
            <person name="Moule S."/>
            <person name="Norberczak H."/>
            <person name="O'Neil S."/>
            <person name="Ormond D."/>
            <person name="Price C."/>
            <person name="Rabbinowitsch E."/>
            <person name="Rutter S."/>
            <person name="Sanders M."/>
            <person name="Saunders D."/>
            <person name="Seeger K."/>
            <person name="Sharp S."/>
            <person name="Simmonds M."/>
            <person name="Skelton J."/>
            <person name="Squares R."/>
            <person name="Squares S."/>
            <person name="Stevens K."/>
            <person name="Unwin L."/>
            <person name="Whitehead S."/>
            <person name="Barrell B.G."/>
            <person name="Maskell D.J."/>
        </authorList>
    </citation>
    <scope>NUCLEOTIDE SEQUENCE [LARGE SCALE GENOMIC DNA]</scope>
    <source>
        <strain>ATCC BAA-588 / NCTC 13252 / RB50</strain>
    </source>
</reference>
<protein>
    <recommendedName>
        <fullName evidence="1">Glycerol-3-phosphate acyltransferase</fullName>
    </recommendedName>
    <alternativeName>
        <fullName evidence="1">Acyl-PO4 G3P acyltransferase</fullName>
    </alternativeName>
    <alternativeName>
        <fullName evidence="1">Acyl-phosphate--glycerol-3-phosphate acyltransferase</fullName>
    </alternativeName>
    <alternativeName>
        <fullName evidence="1">G3P acyltransferase</fullName>
        <shortName evidence="1">GPAT</shortName>
        <ecNumber evidence="1">2.3.1.275</ecNumber>
    </alternativeName>
    <alternativeName>
        <fullName evidence="1">Lysophosphatidic acid synthase</fullName>
        <shortName evidence="1">LPA synthase</shortName>
    </alternativeName>
</protein>
<dbReference type="EC" id="2.3.1.275" evidence="1"/>
<dbReference type="EMBL" id="BX640446">
    <property type="protein sequence ID" value="CAE33513.1"/>
    <property type="molecule type" value="Genomic_DNA"/>
</dbReference>
<dbReference type="RefSeq" id="WP_003811015.1">
    <property type="nucleotide sequence ID" value="NC_002927.3"/>
</dbReference>
<dbReference type="SMR" id="Q7WI35"/>
<dbReference type="GeneID" id="93204840"/>
<dbReference type="KEGG" id="bbr:BB3021"/>
<dbReference type="eggNOG" id="COG0344">
    <property type="taxonomic scope" value="Bacteria"/>
</dbReference>
<dbReference type="HOGENOM" id="CLU_081254_0_0_4"/>
<dbReference type="UniPathway" id="UPA00085"/>
<dbReference type="Proteomes" id="UP000001027">
    <property type="component" value="Chromosome"/>
</dbReference>
<dbReference type="GO" id="GO:0005886">
    <property type="term" value="C:plasma membrane"/>
    <property type="evidence" value="ECO:0007669"/>
    <property type="project" value="UniProtKB-SubCell"/>
</dbReference>
<dbReference type="GO" id="GO:0043772">
    <property type="term" value="F:acyl-phosphate glycerol-3-phosphate acyltransferase activity"/>
    <property type="evidence" value="ECO:0007669"/>
    <property type="project" value="UniProtKB-UniRule"/>
</dbReference>
<dbReference type="GO" id="GO:0008654">
    <property type="term" value="P:phospholipid biosynthetic process"/>
    <property type="evidence" value="ECO:0007669"/>
    <property type="project" value="UniProtKB-UniRule"/>
</dbReference>
<dbReference type="HAMAP" id="MF_01043">
    <property type="entry name" value="PlsY"/>
    <property type="match status" value="1"/>
</dbReference>
<dbReference type="InterPro" id="IPR003811">
    <property type="entry name" value="G3P_acylTferase_PlsY"/>
</dbReference>
<dbReference type="NCBIfam" id="TIGR00023">
    <property type="entry name" value="glycerol-3-phosphate 1-O-acyltransferase PlsY"/>
    <property type="match status" value="1"/>
</dbReference>
<dbReference type="PANTHER" id="PTHR30309:SF0">
    <property type="entry name" value="GLYCEROL-3-PHOSPHATE ACYLTRANSFERASE-RELATED"/>
    <property type="match status" value="1"/>
</dbReference>
<dbReference type="PANTHER" id="PTHR30309">
    <property type="entry name" value="INNER MEMBRANE PROTEIN YGIH"/>
    <property type="match status" value="1"/>
</dbReference>
<dbReference type="Pfam" id="PF02660">
    <property type="entry name" value="G3P_acyltransf"/>
    <property type="match status" value="1"/>
</dbReference>
<dbReference type="SMART" id="SM01207">
    <property type="entry name" value="G3P_acyltransf"/>
    <property type="match status" value="1"/>
</dbReference>
<keyword id="KW-0997">Cell inner membrane</keyword>
<keyword id="KW-1003">Cell membrane</keyword>
<keyword id="KW-0444">Lipid biosynthesis</keyword>
<keyword id="KW-0443">Lipid metabolism</keyword>
<keyword id="KW-0472">Membrane</keyword>
<keyword id="KW-0594">Phospholipid biosynthesis</keyword>
<keyword id="KW-1208">Phospholipid metabolism</keyword>
<keyword id="KW-0808">Transferase</keyword>
<keyword id="KW-0812">Transmembrane</keyword>
<keyword id="KW-1133">Transmembrane helix</keyword>
<gene>
    <name evidence="1" type="primary">plsY</name>
    <name type="ordered locus">BB3021</name>
</gene>
<name>PLSY_BORBR</name>
<comment type="function">
    <text evidence="1">Catalyzes the transfer of an acyl group from acyl-phosphate (acyl-PO(4)) to glycerol-3-phosphate (G3P) to form lysophosphatidic acid (LPA). This enzyme utilizes acyl-phosphate as fatty acyl donor, but not acyl-CoA or acyl-ACP.</text>
</comment>
<comment type="catalytic activity">
    <reaction evidence="1">
        <text>an acyl phosphate + sn-glycerol 3-phosphate = a 1-acyl-sn-glycero-3-phosphate + phosphate</text>
        <dbReference type="Rhea" id="RHEA:34075"/>
        <dbReference type="ChEBI" id="CHEBI:43474"/>
        <dbReference type="ChEBI" id="CHEBI:57597"/>
        <dbReference type="ChEBI" id="CHEBI:57970"/>
        <dbReference type="ChEBI" id="CHEBI:59918"/>
        <dbReference type="EC" id="2.3.1.275"/>
    </reaction>
</comment>
<comment type="pathway">
    <text evidence="1">Lipid metabolism; phospholipid metabolism.</text>
</comment>
<comment type="subunit">
    <text evidence="1">Probably interacts with PlsX.</text>
</comment>
<comment type="subcellular location">
    <subcellularLocation>
        <location evidence="1">Cell inner membrane</location>
        <topology evidence="1">Multi-pass membrane protein</topology>
    </subcellularLocation>
</comment>
<comment type="similarity">
    <text evidence="1">Belongs to the PlsY family.</text>
</comment>
<feature type="chain" id="PRO_0000188333" description="Glycerol-3-phosphate acyltransferase">
    <location>
        <begin position="1"/>
        <end position="215"/>
    </location>
</feature>
<feature type="transmembrane region" description="Helical" evidence="1">
    <location>
        <begin position="14"/>
        <end position="34"/>
    </location>
</feature>
<feature type="transmembrane region" description="Helical" evidence="1">
    <location>
        <begin position="63"/>
        <end position="83"/>
    </location>
</feature>
<feature type="transmembrane region" description="Helical" evidence="1">
    <location>
        <begin position="92"/>
        <end position="112"/>
    </location>
</feature>
<feature type="transmembrane region" description="Helical" evidence="1">
    <location>
        <begin position="128"/>
        <end position="148"/>
    </location>
</feature>
<feature type="transmembrane region" description="Helical" evidence="1">
    <location>
        <begin position="154"/>
        <end position="174"/>
    </location>
</feature>